<gene>
    <name evidence="1" type="primary">hchA</name>
    <name type="ordered locus">ECSE_2196</name>
</gene>
<sequence length="283" mass="31146">MTVQTSKNPQVDIAEDNAFFPSEYSLSQYTSPVSDLDGVDYPKPYRGKHKILVIAADERYLPTDNGKLFSTGNHPIETLLPLYHLHAAGFEFEVATISGLMTKFEYWAMPHKDEKVMPFFEQHKSLFRNPKKLADVVASLNADSEYAAIFVPGGHGALIGLPESQDVAAALQWAIKNDRFVISLCHGPAAFLALRHGDNPLNGYSICAFPDAADKQTPEIGYMPGHLTWYFGEELKKMGMNIINDDIAGRVHKDRKVLTGDSPFAANALGKLAAQEMLAAYAG</sequence>
<accession>B6I112</accession>
<evidence type="ECO:0000255" key="1">
    <source>
        <dbReference type="HAMAP-Rule" id="MF_01046"/>
    </source>
</evidence>
<protein>
    <recommendedName>
        <fullName evidence="1">Protein/nucleic acid deglycase HchA</fullName>
        <ecNumber evidence="1">3.1.2.-</ecNumber>
        <ecNumber evidence="1">3.5.1.-</ecNumber>
        <ecNumber evidence="1">3.5.1.124</ecNumber>
    </recommendedName>
    <alternativeName>
        <fullName evidence="1">Maillard deglycase</fullName>
    </alternativeName>
</protein>
<keyword id="KW-0963">Cytoplasm</keyword>
<keyword id="KW-0227">DNA damage</keyword>
<keyword id="KW-0234">DNA repair</keyword>
<keyword id="KW-0378">Hydrolase</keyword>
<keyword id="KW-0479">Metal-binding</keyword>
<keyword id="KW-0346">Stress response</keyword>
<keyword id="KW-0862">Zinc</keyword>
<proteinExistence type="inferred from homology"/>
<name>HCHA_ECOSE</name>
<organism>
    <name type="scientific">Escherichia coli (strain SE11)</name>
    <dbReference type="NCBI Taxonomy" id="409438"/>
    <lineage>
        <taxon>Bacteria</taxon>
        <taxon>Pseudomonadati</taxon>
        <taxon>Pseudomonadota</taxon>
        <taxon>Gammaproteobacteria</taxon>
        <taxon>Enterobacterales</taxon>
        <taxon>Enterobacteriaceae</taxon>
        <taxon>Escherichia</taxon>
    </lineage>
</organism>
<comment type="function">
    <text evidence="1">Protein and nucleotide deglycase that catalyzes the deglycation of the Maillard adducts formed between amino groups of proteins or nucleotides and reactive carbonyl groups of glyoxals. Thus, functions as a protein deglycase that repairs methylglyoxal- and glyoxal-glycated proteins, and releases repaired proteins and lactate or glycolate, respectively. Deglycates cysteine, arginine and lysine residues in proteins, and thus reactivates these proteins by reversing glycation by glyoxals. Acts on early glycation intermediates (hemithioacetals and aminocarbinols), preventing the formation of Schiff bases and advanced glycation endproducts (AGE). Also functions as a nucleotide deglycase able to repair glycated guanine in the free nucleotide pool (GTP, GDP, GMP, dGTP) and in DNA and RNA. Is thus involved in a major nucleotide repair system named guanine glycation repair (GG repair), dedicated to reversing methylglyoxal and glyoxal damage via nucleotide sanitization and direct nucleic acid repair. Plays an important role in protecting cells from carbonyl stress.</text>
</comment>
<comment type="catalytic activity">
    <reaction evidence="1">
        <text>N(omega)-(1-hydroxy-2-oxopropyl)-L-arginyl-[protein] + H2O = lactate + L-arginyl-[protein] + H(+)</text>
        <dbReference type="Rhea" id="RHEA:49548"/>
        <dbReference type="Rhea" id="RHEA-COMP:10532"/>
        <dbReference type="Rhea" id="RHEA-COMP:12428"/>
        <dbReference type="ChEBI" id="CHEBI:15377"/>
        <dbReference type="ChEBI" id="CHEBI:15378"/>
        <dbReference type="ChEBI" id="CHEBI:24996"/>
        <dbReference type="ChEBI" id="CHEBI:29965"/>
        <dbReference type="ChEBI" id="CHEBI:131708"/>
        <dbReference type="EC" id="3.5.1.124"/>
    </reaction>
</comment>
<comment type="catalytic activity">
    <reaction evidence="1">
        <text>N(6)-(1-hydroxy-2-oxopropyl)-L-lysyl-[protein] + H2O = lactate + L-lysyl-[protein] + H(+)</text>
        <dbReference type="Rhea" id="RHEA:49552"/>
        <dbReference type="Rhea" id="RHEA-COMP:9752"/>
        <dbReference type="Rhea" id="RHEA-COMP:12429"/>
        <dbReference type="ChEBI" id="CHEBI:15377"/>
        <dbReference type="ChEBI" id="CHEBI:15378"/>
        <dbReference type="ChEBI" id="CHEBI:24996"/>
        <dbReference type="ChEBI" id="CHEBI:29969"/>
        <dbReference type="ChEBI" id="CHEBI:131709"/>
        <dbReference type="EC" id="3.5.1.124"/>
    </reaction>
</comment>
<comment type="catalytic activity">
    <reaction evidence="1">
        <text>S-(1-hydroxy-2-oxopropyl)-L-cysteinyl-[protein] + H2O = lactate + L-cysteinyl-[protein] + H(+)</text>
        <dbReference type="Rhea" id="RHEA:49556"/>
        <dbReference type="Rhea" id="RHEA-COMP:10131"/>
        <dbReference type="Rhea" id="RHEA-COMP:12430"/>
        <dbReference type="ChEBI" id="CHEBI:15377"/>
        <dbReference type="ChEBI" id="CHEBI:15378"/>
        <dbReference type="ChEBI" id="CHEBI:24996"/>
        <dbReference type="ChEBI" id="CHEBI:29950"/>
        <dbReference type="ChEBI" id="CHEBI:131710"/>
        <dbReference type="EC" id="3.5.1.124"/>
    </reaction>
</comment>
<comment type="catalytic activity">
    <reaction evidence="1">
        <text>N(omega)-(1-hydroxy-2-oxoethyl)-L-arginyl-[protein] + H2O = L-arginyl-[protein] + glycolate + H(+)</text>
        <dbReference type="Rhea" id="RHEA:57188"/>
        <dbReference type="Rhea" id="RHEA-COMP:10532"/>
        <dbReference type="Rhea" id="RHEA-COMP:14844"/>
        <dbReference type="ChEBI" id="CHEBI:15377"/>
        <dbReference type="ChEBI" id="CHEBI:15378"/>
        <dbReference type="ChEBI" id="CHEBI:29805"/>
        <dbReference type="ChEBI" id="CHEBI:29965"/>
        <dbReference type="ChEBI" id="CHEBI:141553"/>
        <dbReference type="EC" id="3.5.1.124"/>
    </reaction>
</comment>
<comment type="catalytic activity">
    <reaction evidence="1">
        <text>N(6)-(1-hydroxy-2-oxoethyl)-L-lysyl-[protein] + H2O = glycolate + L-lysyl-[protein] + H(+)</text>
        <dbReference type="Rhea" id="RHEA:57192"/>
        <dbReference type="Rhea" id="RHEA-COMP:9752"/>
        <dbReference type="Rhea" id="RHEA-COMP:14845"/>
        <dbReference type="ChEBI" id="CHEBI:15377"/>
        <dbReference type="ChEBI" id="CHEBI:15378"/>
        <dbReference type="ChEBI" id="CHEBI:29805"/>
        <dbReference type="ChEBI" id="CHEBI:29969"/>
        <dbReference type="ChEBI" id="CHEBI:141554"/>
        <dbReference type="EC" id="3.5.1.124"/>
    </reaction>
</comment>
<comment type="catalytic activity">
    <reaction evidence="1">
        <text>S-(1-hydroxy-2-oxoethyl)-L-cysteinyl-[protein] + H2O = glycolate + L-cysteinyl-[protein] + H(+)</text>
        <dbReference type="Rhea" id="RHEA:57196"/>
        <dbReference type="Rhea" id="RHEA-COMP:10131"/>
        <dbReference type="Rhea" id="RHEA-COMP:14846"/>
        <dbReference type="ChEBI" id="CHEBI:15377"/>
        <dbReference type="ChEBI" id="CHEBI:15378"/>
        <dbReference type="ChEBI" id="CHEBI:29805"/>
        <dbReference type="ChEBI" id="CHEBI:29950"/>
        <dbReference type="ChEBI" id="CHEBI:141555"/>
        <dbReference type="EC" id="3.5.1.124"/>
    </reaction>
</comment>
<comment type="catalytic activity">
    <reaction evidence="1">
        <text>N(2)-(1-hydroxy-2-oxopropyl)-dGTP + H2O = lactate + dGTP + H(+)</text>
        <dbReference type="Rhea" id="RHEA:57244"/>
        <dbReference type="ChEBI" id="CHEBI:15377"/>
        <dbReference type="ChEBI" id="CHEBI:15378"/>
        <dbReference type="ChEBI" id="CHEBI:24996"/>
        <dbReference type="ChEBI" id="CHEBI:61429"/>
        <dbReference type="ChEBI" id="CHEBI:141569"/>
    </reaction>
</comment>
<comment type="catalytic activity">
    <reaction evidence="1">
        <text>N(2)-(1-hydroxy-2-oxopropyl)-GTP + H2O = lactate + GTP + H(+)</text>
        <dbReference type="Rhea" id="RHEA:57256"/>
        <dbReference type="ChEBI" id="CHEBI:15377"/>
        <dbReference type="ChEBI" id="CHEBI:15378"/>
        <dbReference type="ChEBI" id="CHEBI:24996"/>
        <dbReference type="ChEBI" id="CHEBI:37565"/>
        <dbReference type="ChEBI" id="CHEBI:141570"/>
    </reaction>
</comment>
<comment type="catalytic activity">
    <reaction evidence="1">
        <text>N(2)-(1-hydroxy-2-oxopropyl)-GDP + H2O = lactate + GDP + H(+)</text>
        <dbReference type="Rhea" id="RHEA:57260"/>
        <dbReference type="ChEBI" id="CHEBI:15377"/>
        <dbReference type="ChEBI" id="CHEBI:15378"/>
        <dbReference type="ChEBI" id="CHEBI:24996"/>
        <dbReference type="ChEBI" id="CHEBI:58189"/>
        <dbReference type="ChEBI" id="CHEBI:141573"/>
    </reaction>
</comment>
<comment type="catalytic activity">
    <reaction evidence="1">
        <text>N(2)-(1-hydroxy-2-oxopropyl)-GMP + H2O = lactate + GMP + H(+)</text>
        <dbReference type="Rhea" id="RHEA:57268"/>
        <dbReference type="ChEBI" id="CHEBI:15377"/>
        <dbReference type="ChEBI" id="CHEBI:15378"/>
        <dbReference type="ChEBI" id="CHEBI:24996"/>
        <dbReference type="ChEBI" id="CHEBI:58115"/>
        <dbReference type="ChEBI" id="CHEBI:141575"/>
    </reaction>
</comment>
<comment type="catalytic activity">
    <reaction evidence="1">
        <text>N(2)-(1-hydroxy-2-oxoethyl)-dGTP + H2O = dGTP + glycolate + H(+)</text>
        <dbReference type="Rhea" id="RHEA:57248"/>
        <dbReference type="ChEBI" id="CHEBI:15377"/>
        <dbReference type="ChEBI" id="CHEBI:15378"/>
        <dbReference type="ChEBI" id="CHEBI:29805"/>
        <dbReference type="ChEBI" id="CHEBI:61429"/>
        <dbReference type="ChEBI" id="CHEBI:141572"/>
    </reaction>
</comment>
<comment type="catalytic activity">
    <reaction evidence="1">
        <text>N(2)-(1-hydroxy-2-oxoethyl)-GTP + H2O = glycolate + GTP + H(+)</text>
        <dbReference type="Rhea" id="RHEA:57252"/>
        <dbReference type="ChEBI" id="CHEBI:15377"/>
        <dbReference type="ChEBI" id="CHEBI:15378"/>
        <dbReference type="ChEBI" id="CHEBI:29805"/>
        <dbReference type="ChEBI" id="CHEBI:37565"/>
        <dbReference type="ChEBI" id="CHEBI:141571"/>
    </reaction>
</comment>
<comment type="catalytic activity">
    <reaction evidence="1">
        <text>N(2)-(1-hydroxy-2-oxoethyl)-GDP + H2O = glycolate + GDP + H(+)</text>
        <dbReference type="Rhea" id="RHEA:57264"/>
        <dbReference type="ChEBI" id="CHEBI:15377"/>
        <dbReference type="ChEBI" id="CHEBI:15378"/>
        <dbReference type="ChEBI" id="CHEBI:29805"/>
        <dbReference type="ChEBI" id="CHEBI:58189"/>
        <dbReference type="ChEBI" id="CHEBI:141574"/>
    </reaction>
</comment>
<comment type="catalytic activity">
    <reaction evidence="1">
        <text>N(2)-(1-hydroxy-2-oxoethyl)-GMP + H2O = glycolate + GMP + H(+)</text>
        <dbReference type="Rhea" id="RHEA:57304"/>
        <dbReference type="ChEBI" id="CHEBI:15377"/>
        <dbReference type="ChEBI" id="CHEBI:15378"/>
        <dbReference type="ChEBI" id="CHEBI:29805"/>
        <dbReference type="ChEBI" id="CHEBI:58115"/>
        <dbReference type="ChEBI" id="CHEBI:141576"/>
    </reaction>
</comment>
<comment type="catalytic activity">
    <reaction evidence="1">
        <text>an N(2)-(1-hydroxy-2-oxopropyl)-guanosine in RNA + H2O = a guanosine in RNA + lactate + H(+)</text>
        <dbReference type="Rhea" id="RHEA:57288"/>
        <dbReference type="Rhea" id="RHEA-COMP:14855"/>
        <dbReference type="Rhea" id="RHEA-COMP:14858"/>
        <dbReference type="ChEBI" id="CHEBI:15377"/>
        <dbReference type="ChEBI" id="CHEBI:15378"/>
        <dbReference type="ChEBI" id="CHEBI:24996"/>
        <dbReference type="ChEBI" id="CHEBI:74269"/>
        <dbReference type="ChEBI" id="CHEBI:141580"/>
    </reaction>
</comment>
<comment type="catalytic activity">
    <reaction evidence="1">
        <text>an N(2)-(1-hydroxy-2-oxopropyl)-2'-deoxyguanosine in DNA + H2O = a 2'-deoxyguanosine in DNA + lactate + H(+)</text>
        <dbReference type="Rhea" id="RHEA:57300"/>
        <dbReference type="Rhea" id="RHEA-COMP:11367"/>
        <dbReference type="Rhea" id="RHEA-COMP:14856"/>
        <dbReference type="ChEBI" id="CHEBI:15377"/>
        <dbReference type="ChEBI" id="CHEBI:15378"/>
        <dbReference type="ChEBI" id="CHEBI:24996"/>
        <dbReference type="ChEBI" id="CHEBI:85445"/>
        <dbReference type="ChEBI" id="CHEBI:141578"/>
    </reaction>
</comment>
<comment type="catalytic activity">
    <reaction evidence="1">
        <text>an N(2)-(1-hydroxy-2-oxoethyl)-guanosine in RNA + H2O = a guanosine in RNA + glycolate + H(+)</text>
        <dbReference type="Rhea" id="RHEA:57292"/>
        <dbReference type="Rhea" id="RHEA-COMP:14855"/>
        <dbReference type="Rhea" id="RHEA-COMP:14859"/>
        <dbReference type="ChEBI" id="CHEBI:15377"/>
        <dbReference type="ChEBI" id="CHEBI:15378"/>
        <dbReference type="ChEBI" id="CHEBI:29805"/>
        <dbReference type="ChEBI" id="CHEBI:74269"/>
        <dbReference type="ChEBI" id="CHEBI:141581"/>
    </reaction>
</comment>
<comment type="catalytic activity">
    <reaction evidence="1">
        <text>an N(2)-(1-hydroxy-2-oxoethyl)-2'-deoxyguanosine in DNA + H2O = a 2'-deoxyguanosine in DNA + glycolate + H(+)</text>
        <dbReference type="Rhea" id="RHEA:57296"/>
        <dbReference type="Rhea" id="RHEA-COMP:11367"/>
        <dbReference type="Rhea" id="RHEA-COMP:14857"/>
        <dbReference type="ChEBI" id="CHEBI:15377"/>
        <dbReference type="ChEBI" id="CHEBI:15378"/>
        <dbReference type="ChEBI" id="CHEBI:29805"/>
        <dbReference type="ChEBI" id="CHEBI:85445"/>
        <dbReference type="ChEBI" id="CHEBI:141579"/>
    </reaction>
</comment>
<comment type="subunit">
    <text evidence="1">Homodimer.</text>
</comment>
<comment type="subcellular location">
    <subcellularLocation>
        <location evidence="1">Cytoplasm</location>
    </subcellularLocation>
</comment>
<comment type="induction">
    <text evidence="1">By heat shock.</text>
</comment>
<comment type="similarity">
    <text evidence="1">Belongs to the peptidase C56 family. HchA subfamily.</text>
</comment>
<dbReference type="EC" id="3.1.2.-" evidence="1"/>
<dbReference type="EC" id="3.5.1.-" evidence="1"/>
<dbReference type="EC" id="3.5.1.124" evidence="1"/>
<dbReference type="EMBL" id="AP009240">
    <property type="protein sequence ID" value="BAG77720.1"/>
    <property type="molecule type" value="Genomic_DNA"/>
</dbReference>
<dbReference type="RefSeq" id="WP_000218209.1">
    <property type="nucleotide sequence ID" value="NC_011415.1"/>
</dbReference>
<dbReference type="SMR" id="B6I112"/>
<dbReference type="MEROPS" id="C56.006"/>
<dbReference type="KEGG" id="ecy:ECSE_2196"/>
<dbReference type="HOGENOM" id="CLU_066933_0_0_6"/>
<dbReference type="Proteomes" id="UP000008199">
    <property type="component" value="Chromosome"/>
</dbReference>
<dbReference type="GO" id="GO:0005737">
    <property type="term" value="C:cytoplasm"/>
    <property type="evidence" value="ECO:0007669"/>
    <property type="project" value="UniProtKB-SubCell"/>
</dbReference>
<dbReference type="GO" id="GO:0019172">
    <property type="term" value="F:glyoxalase III activity"/>
    <property type="evidence" value="ECO:0007669"/>
    <property type="project" value="TreeGrafter"/>
</dbReference>
<dbReference type="GO" id="GO:0036524">
    <property type="term" value="F:protein deglycase activity"/>
    <property type="evidence" value="ECO:0007669"/>
    <property type="project" value="UniProtKB-UniRule"/>
</dbReference>
<dbReference type="GO" id="GO:0016790">
    <property type="term" value="F:thiolester hydrolase activity"/>
    <property type="evidence" value="ECO:0007669"/>
    <property type="project" value="UniProtKB-UniRule"/>
</dbReference>
<dbReference type="GO" id="GO:0008270">
    <property type="term" value="F:zinc ion binding"/>
    <property type="evidence" value="ECO:0007669"/>
    <property type="project" value="UniProtKB-UniRule"/>
</dbReference>
<dbReference type="GO" id="GO:0006281">
    <property type="term" value="P:DNA repair"/>
    <property type="evidence" value="ECO:0007669"/>
    <property type="project" value="UniProtKB-UniRule"/>
</dbReference>
<dbReference type="GO" id="GO:0019243">
    <property type="term" value="P:methylglyoxal catabolic process to D-lactate via S-lactoyl-glutathione"/>
    <property type="evidence" value="ECO:0007669"/>
    <property type="project" value="TreeGrafter"/>
</dbReference>
<dbReference type="GO" id="GO:0030091">
    <property type="term" value="P:protein repair"/>
    <property type="evidence" value="ECO:0007669"/>
    <property type="project" value="UniProtKB-UniRule"/>
</dbReference>
<dbReference type="FunFam" id="3.40.50.880:FF:000026">
    <property type="entry name" value="Protein/nucleic acid deglycase HchA"/>
    <property type="match status" value="1"/>
</dbReference>
<dbReference type="Gene3D" id="3.40.50.880">
    <property type="match status" value="1"/>
</dbReference>
<dbReference type="HAMAP" id="MF_01046">
    <property type="entry name" value="Deglycase_HchA"/>
    <property type="match status" value="1"/>
</dbReference>
<dbReference type="InterPro" id="IPR029062">
    <property type="entry name" value="Class_I_gatase-like"/>
</dbReference>
<dbReference type="InterPro" id="IPR017283">
    <property type="entry name" value="HchA"/>
</dbReference>
<dbReference type="InterPro" id="IPR050325">
    <property type="entry name" value="Prot/Nucl_acid_deglycase"/>
</dbReference>
<dbReference type="NCBIfam" id="NF003168">
    <property type="entry name" value="PRK04155.1"/>
    <property type="match status" value="1"/>
</dbReference>
<dbReference type="PANTHER" id="PTHR48094">
    <property type="entry name" value="PROTEIN/NUCLEIC ACID DEGLYCASE DJ-1-RELATED"/>
    <property type="match status" value="1"/>
</dbReference>
<dbReference type="PANTHER" id="PTHR48094:SF20">
    <property type="entry name" value="PROTEIN_NUCLEIC ACID DEGLYCASE 1"/>
    <property type="match status" value="1"/>
</dbReference>
<dbReference type="PIRSF" id="PIRSF037798">
    <property type="entry name" value="Chaperone_HchA"/>
    <property type="match status" value="1"/>
</dbReference>
<dbReference type="SUPFAM" id="SSF52317">
    <property type="entry name" value="Class I glutamine amidotransferase-like"/>
    <property type="match status" value="1"/>
</dbReference>
<reference key="1">
    <citation type="journal article" date="2008" name="DNA Res.">
        <title>Complete genome sequence and comparative analysis of the wild-type commensal Escherichia coli strain SE11 isolated from a healthy adult.</title>
        <authorList>
            <person name="Oshima K."/>
            <person name="Toh H."/>
            <person name="Ogura Y."/>
            <person name="Sasamoto H."/>
            <person name="Morita H."/>
            <person name="Park S.-H."/>
            <person name="Ooka T."/>
            <person name="Iyoda S."/>
            <person name="Taylor T.D."/>
            <person name="Hayashi T."/>
            <person name="Itoh K."/>
            <person name="Hattori M."/>
        </authorList>
    </citation>
    <scope>NUCLEOTIDE SEQUENCE [LARGE SCALE GENOMIC DNA]</scope>
    <source>
        <strain>SE11</strain>
    </source>
</reference>
<feature type="chain" id="PRO_1000136180" description="Protein/nucleic acid deglycase HchA">
    <location>
        <begin position="1"/>
        <end position="283"/>
    </location>
</feature>
<feature type="active site" description="Nucleophile" evidence="1">
    <location>
        <position position="185"/>
    </location>
</feature>
<feature type="binding site" evidence="1">
    <location>
        <position position="86"/>
    </location>
    <ligand>
        <name>Zn(2+)</name>
        <dbReference type="ChEBI" id="CHEBI:29105"/>
    </ligand>
</feature>
<feature type="binding site" evidence="1">
    <location>
        <position position="91"/>
    </location>
    <ligand>
        <name>Zn(2+)</name>
        <dbReference type="ChEBI" id="CHEBI:29105"/>
    </ligand>
</feature>
<feature type="binding site" evidence="1">
    <location>
        <position position="123"/>
    </location>
    <ligand>
        <name>Zn(2+)</name>
        <dbReference type="ChEBI" id="CHEBI:29105"/>
    </ligand>
</feature>